<accession>B1MZH7</accession>
<comment type="function">
    <text evidence="1">Required for maturation of 30S ribosomal subunits.</text>
</comment>
<comment type="subcellular location">
    <subcellularLocation>
        <location evidence="1">Cytoplasm</location>
    </subcellularLocation>
</comment>
<comment type="similarity">
    <text evidence="1">Belongs to the RimP family.</text>
</comment>
<keyword id="KW-0963">Cytoplasm</keyword>
<keyword id="KW-1185">Reference proteome</keyword>
<keyword id="KW-0690">Ribosome biogenesis</keyword>
<proteinExistence type="inferred from homology"/>
<dbReference type="EMBL" id="DQ489736">
    <property type="protein sequence ID" value="ACA82929.1"/>
    <property type="molecule type" value="Genomic_DNA"/>
</dbReference>
<dbReference type="RefSeq" id="WP_004907839.1">
    <property type="nucleotide sequence ID" value="NC_010471.1"/>
</dbReference>
<dbReference type="SMR" id="B1MZH7"/>
<dbReference type="STRING" id="349519.LCK_01102"/>
<dbReference type="KEGG" id="lci:LCK_01102"/>
<dbReference type="eggNOG" id="COG0779">
    <property type="taxonomic scope" value="Bacteria"/>
</dbReference>
<dbReference type="HOGENOM" id="CLU_070525_2_2_9"/>
<dbReference type="OrthoDB" id="9805006at2"/>
<dbReference type="Proteomes" id="UP000002166">
    <property type="component" value="Chromosome"/>
</dbReference>
<dbReference type="GO" id="GO:0005829">
    <property type="term" value="C:cytosol"/>
    <property type="evidence" value="ECO:0007669"/>
    <property type="project" value="TreeGrafter"/>
</dbReference>
<dbReference type="GO" id="GO:0000028">
    <property type="term" value="P:ribosomal small subunit assembly"/>
    <property type="evidence" value="ECO:0007669"/>
    <property type="project" value="TreeGrafter"/>
</dbReference>
<dbReference type="GO" id="GO:0006412">
    <property type="term" value="P:translation"/>
    <property type="evidence" value="ECO:0007669"/>
    <property type="project" value="TreeGrafter"/>
</dbReference>
<dbReference type="CDD" id="cd01734">
    <property type="entry name" value="YlxS_C"/>
    <property type="match status" value="1"/>
</dbReference>
<dbReference type="Gene3D" id="2.30.30.180">
    <property type="entry name" value="Ribosome maturation factor RimP, C-terminal domain"/>
    <property type="match status" value="1"/>
</dbReference>
<dbReference type="Gene3D" id="3.30.300.70">
    <property type="entry name" value="RimP-like superfamily, N-terminal"/>
    <property type="match status" value="1"/>
</dbReference>
<dbReference type="HAMAP" id="MF_01077">
    <property type="entry name" value="RimP"/>
    <property type="match status" value="1"/>
</dbReference>
<dbReference type="InterPro" id="IPR003728">
    <property type="entry name" value="Ribosome_maturation_RimP"/>
</dbReference>
<dbReference type="InterPro" id="IPR028998">
    <property type="entry name" value="RimP_C"/>
</dbReference>
<dbReference type="InterPro" id="IPR036847">
    <property type="entry name" value="RimP_C_sf"/>
</dbReference>
<dbReference type="InterPro" id="IPR028989">
    <property type="entry name" value="RimP_N"/>
</dbReference>
<dbReference type="InterPro" id="IPR035956">
    <property type="entry name" value="RimP_N_sf"/>
</dbReference>
<dbReference type="PANTHER" id="PTHR33867">
    <property type="entry name" value="RIBOSOME MATURATION FACTOR RIMP"/>
    <property type="match status" value="1"/>
</dbReference>
<dbReference type="PANTHER" id="PTHR33867:SF1">
    <property type="entry name" value="RIBOSOME MATURATION FACTOR RIMP"/>
    <property type="match status" value="1"/>
</dbReference>
<dbReference type="Pfam" id="PF17384">
    <property type="entry name" value="DUF150_C"/>
    <property type="match status" value="1"/>
</dbReference>
<dbReference type="Pfam" id="PF02576">
    <property type="entry name" value="RimP_N"/>
    <property type="match status" value="1"/>
</dbReference>
<dbReference type="SUPFAM" id="SSF74942">
    <property type="entry name" value="YhbC-like, C-terminal domain"/>
    <property type="match status" value="1"/>
</dbReference>
<dbReference type="SUPFAM" id="SSF75420">
    <property type="entry name" value="YhbC-like, N-terminal domain"/>
    <property type="match status" value="1"/>
</dbReference>
<sequence length="158" mass="17839">MANKVAQEISTLIEPLINAQQLLLWDVSYTKEGGQKVLRILIDKRNHEFITMDDITTFTQAVNELLDTIEPDPIPEAYMLDISSPGADRPLIRPWHYEWAKASGENILVAFFVAKNGQKKWQGKIETIDDKGITLTTSSETIVCTFDEIAKAVLDTQF</sequence>
<organism>
    <name type="scientific">Leuconostoc citreum (strain KM20)</name>
    <dbReference type="NCBI Taxonomy" id="349519"/>
    <lineage>
        <taxon>Bacteria</taxon>
        <taxon>Bacillati</taxon>
        <taxon>Bacillota</taxon>
        <taxon>Bacilli</taxon>
        <taxon>Lactobacillales</taxon>
        <taxon>Lactobacillaceae</taxon>
        <taxon>Leuconostoc</taxon>
    </lineage>
</organism>
<evidence type="ECO:0000255" key="1">
    <source>
        <dbReference type="HAMAP-Rule" id="MF_01077"/>
    </source>
</evidence>
<protein>
    <recommendedName>
        <fullName evidence="1">Ribosome maturation factor RimP</fullName>
    </recommendedName>
</protein>
<name>RIMP_LEUCK</name>
<feature type="chain" id="PRO_0000384695" description="Ribosome maturation factor RimP">
    <location>
        <begin position="1"/>
        <end position="158"/>
    </location>
</feature>
<reference key="1">
    <citation type="journal article" date="2008" name="J. Bacteriol.">
        <title>Complete genome sequence of Leuconostoc citreum KM20.</title>
        <authorList>
            <person name="Kim J.F."/>
            <person name="Jeong H."/>
            <person name="Lee J.-S."/>
            <person name="Choi S.-H."/>
            <person name="Ha M."/>
            <person name="Hur C.-G."/>
            <person name="Kim J.-S."/>
            <person name="Lee S."/>
            <person name="Park H.-S."/>
            <person name="Park Y.-H."/>
            <person name="Oh T.K."/>
        </authorList>
    </citation>
    <scope>NUCLEOTIDE SEQUENCE [LARGE SCALE GENOMIC DNA]</scope>
    <source>
        <strain>KM20</strain>
    </source>
</reference>
<gene>
    <name evidence="1" type="primary">rimP</name>
    <name type="ordered locus">LCK_01102</name>
</gene>